<keyword id="KW-1003">Cell membrane</keyword>
<keyword id="KW-0472">Membrane</keyword>
<keyword id="KW-1185">Reference proteome</keyword>
<keyword id="KW-0812">Transmembrane</keyword>
<keyword id="KW-1133">Transmembrane helix</keyword>
<name>PBPB_MYCS2</name>
<reference key="1">
    <citation type="submission" date="2006-10" db="EMBL/GenBank/DDBJ databases">
        <authorList>
            <person name="Fleischmann R.D."/>
            <person name="Dodson R.J."/>
            <person name="Haft D.H."/>
            <person name="Merkel J.S."/>
            <person name="Nelson W.C."/>
            <person name="Fraser C.M."/>
        </authorList>
    </citation>
    <scope>NUCLEOTIDE SEQUENCE [LARGE SCALE GENOMIC DNA]</scope>
    <source>
        <strain>ATCC 700084 / mc(2)155</strain>
    </source>
</reference>
<reference key="2">
    <citation type="journal article" date="2007" name="Genome Biol.">
        <title>Interrupted coding sequences in Mycobacterium smegmatis: authentic mutations or sequencing errors?</title>
        <authorList>
            <person name="Deshayes C."/>
            <person name="Perrodou E."/>
            <person name="Gallien S."/>
            <person name="Euphrasie D."/>
            <person name="Schaeffer C."/>
            <person name="Van-Dorsselaer A."/>
            <person name="Poch O."/>
            <person name="Lecompte O."/>
            <person name="Reyrat J.-M."/>
        </authorList>
    </citation>
    <scope>NUCLEOTIDE SEQUENCE [LARGE SCALE GENOMIC DNA]</scope>
    <source>
        <strain>ATCC 700084 / mc(2)155</strain>
    </source>
</reference>
<reference key="3">
    <citation type="journal article" date="2009" name="Genome Res.">
        <title>Ortho-proteogenomics: multiple proteomes investigation through orthology and a new MS-based protocol.</title>
        <authorList>
            <person name="Gallien S."/>
            <person name="Perrodou E."/>
            <person name="Carapito C."/>
            <person name="Deshayes C."/>
            <person name="Reyrat J.-M."/>
            <person name="Van Dorsselaer A."/>
            <person name="Poch O."/>
            <person name="Schaeffer C."/>
            <person name="Lecompte O."/>
        </authorList>
    </citation>
    <scope>NUCLEOTIDE SEQUENCE [LARGE SCALE GENOMIC DNA]</scope>
    <source>
        <strain>ATCC 700084 / mc(2)155</strain>
    </source>
</reference>
<reference key="4">
    <citation type="journal article" date="2009" name="Mol. Microbiol.">
        <title>Novel role of Wag31 in protection of mycobacteria under oxidative stress.</title>
        <authorList>
            <person name="Mukherjee P."/>
            <person name="Sureka K."/>
            <person name="Datta P."/>
            <person name="Hossain T."/>
            <person name="Barik S."/>
            <person name="Das K.P."/>
            <person name="Kundu M."/>
            <person name="Basu J."/>
        </authorList>
    </citation>
    <scope>FUNCTION</scope>
    <scope>INTERACTION WITH WAG31</scope>
    <source>
        <strain>ATCC 700084 / mc(2)155</strain>
    </source>
</reference>
<dbReference type="EMBL" id="CP000480">
    <property type="protein sequence ID" value="ABK71440.1"/>
    <property type="molecule type" value="Genomic_DNA"/>
</dbReference>
<dbReference type="EMBL" id="CP001663">
    <property type="protein sequence ID" value="AFP40590.1"/>
    <property type="molecule type" value="Genomic_DNA"/>
</dbReference>
<dbReference type="RefSeq" id="WP_011729661.1">
    <property type="nucleotide sequence ID" value="NZ_SIJM01000003.1"/>
</dbReference>
<dbReference type="RefSeq" id="YP_888510.1">
    <property type="nucleotide sequence ID" value="NC_008596.1"/>
</dbReference>
<dbReference type="SMR" id="A0R022"/>
<dbReference type="STRING" id="246196.MSMEG_4233"/>
<dbReference type="PaxDb" id="246196-MSMEI_4133"/>
<dbReference type="KEGG" id="msb:LJ00_20985"/>
<dbReference type="KEGG" id="msg:MSMEI_4133"/>
<dbReference type="KEGG" id="msm:MSMEG_4233"/>
<dbReference type="PATRIC" id="fig|246196.19.peg.4153"/>
<dbReference type="eggNOG" id="COG0768">
    <property type="taxonomic scope" value="Bacteria"/>
</dbReference>
<dbReference type="OrthoDB" id="9789078at2"/>
<dbReference type="Proteomes" id="UP000000757">
    <property type="component" value="Chromosome"/>
</dbReference>
<dbReference type="Proteomes" id="UP000006158">
    <property type="component" value="Chromosome"/>
</dbReference>
<dbReference type="GO" id="GO:0005886">
    <property type="term" value="C:plasma membrane"/>
    <property type="evidence" value="ECO:0007669"/>
    <property type="project" value="UniProtKB-SubCell"/>
</dbReference>
<dbReference type="GO" id="GO:0008658">
    <property type="term" value="F:penicillin binding"/>
    <property type="evidence" value="ECO:0007669"/>
    <property type="project" value="InterPro"/>
</dbReference>
<dbReference type="GO" id="GO:0071555">
    <property type="term" value="P:cell wall organization"/>
    <property type="evidence" value="ECO:0007669"/>
    <property type="project" value="TreeGrafter"/>
</dbReference>
<dbReference type="FunFam" id="3.30.450.330:FF:000003">
    <property type="entry name" value="Cell division protein FtsI"/>
    <property type="match status" value="1"/>
</dbReference>
<dbReference type="Gene3D" id="3.30.450.330">
    <property type="match status" value="1"/>
</dbReference>
<dbReference type="Gene3D" id="3.40.710.10">
    <property type="entry name" value="DD-peptidase/beta-lactamase superfamily"/>
    <property type="match status" value="1"/>
</dbReference>
<dbReference type="Gene3D" id="3.90.1310.10">
    <property type="entry name" value="Penicillin-binding protein 2a (Domain 2)"/>
    <property type="match status" value="1"/>
</dbReference>
<dbReference type="InterPro" id="IPR050515">
    <property type="entry name" value="Bact_Transpept/Beta-Lactamase"/>
</dbReference>
<dbReference type="InterPro" id="IPR012338">
    <property type="entry name" value="Beta-lactam/transpept-like"/>
</dbReference>
<dbReference type="InterPro" id="IPR005311">
    <property type="entry name" value="PBP_dimer"/>
</dbReference>
<dbReference type="InterPro" id="IPR036138">
    <property type="entry name" value="PBP_dimer_sf"/>
</dbReference>
<dbReference type="InterPro" id="IPR001460">
    <property type="entry name" value="PCN-bd_Tpept"/>
</dbReference>
<dbReference type="PANTHER" id="PTHR30627">
    <property type="entry name" value="PEPTIDOGLYCAN D,D-TRANSPEPTIDASE"/>
    <property type="match status" value="1"/>
</dbReference>
<dbReference type="PANTHER" id="PTHR30627:SF1">
    <property type="entry name" value="PEPTIDOGLYCAN D,D-TRANSPEPTIDASE FTSI"/>
    <property type="match status" value="1"/>
</dbReference>
<dbReference type="Pfam" id="PF03717">
    <property type="entry name" value="PBP_dimer"/>
    <property type="match status" value="1"/>
</dbReference>
<dbReference type="Pfam" id="PF00905">
    <property type="entry name" value="Transpeptidase"/>
    <property type="match status" value="1"/>
</dbReference>
<dbReference type="SUPFAM" id="SSF56601">
    <property type="entry name" value="beta-lactamase/transpeptidase-like"/>
    <property type="match status" value="1"/>
</dbReference>
<dbReference type="SUPFAM" id="SSF56519">
    <property type="entry name" value="Penicillin binding protein dimerisation domain"/>
    <property type="match status" value="1"/>
</dbReference>
<proteinExistence type="evidence at protein level"/>
<evidence type="ECO:0000250" key="1">
    <source>
        <dbReference type="UniProtKB" id="P0AD65"/>
    </source>
</evidence>
<evidence type="ECO:0000255" key="2"/>
<evidence type="ECO:0000256" key="3">
    <source>
        <dbReference type="SAM" id="MobiDB-lite"/>
    </source>
</evidence>
<evidence type="ECO:0000269" key="4">
    <source>
    </source>
</evidence>
<evidence type="ECO:0000305" key="5"/>
<protein>
    <recommendedName>
        <fullName>Penicillin-binding protein PbpB</fullName>
    </recommendedName>
    <alternativeName>
        <fullName>PBP3</fullName>
    </alternativeName>
</protein>
<sequence length="648" mass="69708">MSRRGDRPRTPAQPRKKARVDQPRSARTRRTRVSEAEAGLRSSSFVFRHRTGNLAILAVLVIAAVQLFMLQVPRAAGLRAEAASQLKVTDITPAIRGSIIDRNNDKLAFTIEARALTFQPTRVRKQLDEAWRKAQEAGSSTSDDVPNPDERLNEIAKEIAARLNNTPDAKTVLKKLKSNETFVYLARAVDPAIANAITDKFPEVGSERQDLRQYPGGSLAANIVGGIDWDGHGLLGLEDSLDAVLAGTDGSVTYDRGSDGVVIPGSYRNRHDAVDGSTVQLTIDDDIQYHVQQQVQMAKDASGAKNVSAVVLDAKTGEVLAMSNDNTFDPSQDIGRQADRQMGNPSVSSPFEPGSVNKIVTAAAAIENGLTNPDEVLQVPGSIHMGGVTVRDAWNHGVMPYTTTGVFGKSSNVGTLMLAQRVGPERFYEMLRKFGLGQRTNVGLPGESSGLLPPIDQWSGSSFSNLPIGQGLSMTLLQMAAMYQTVANDGVRVPPRIIKSTIAPDGTVTEEERPEGIRVISPETARTLRSMFRSVVQRDPMGVQQGTGPQAAVEGYQIAGKTGTAQQINPACGCYYDDVYWITFAGIAPADDPRYVIGIMMDAPQRAADGSPGSSAAPLFHEIASWLLQRHNVPLSPDPGPPLTLQAT</sequence>
<organism>
    <name type="scientific">Mycolicibacterium smegmatis (strain ATCC 700084 / mc(2)155)</name>
    <name type="common">Mycobacterium smegmatis</name>
    <dbReference type="NCBI Taxonomy" id="246196"/>
    <lineage>
        <taxon>Bacteria</taxon>
        <taxon>Bacillati</taxon>
        <taxon>Actinomycetota</taxon>
        <taxon>Actinomycetes</taxon>
        <taxon>Mycobacteriales</taxon>
        <taxon>Mycobacteriaceae</taxon>
        <taxon>Mycolicibacterium</taxon>
    </lineage>
</organism>
<feature type="chain" id="PRO_0000422680" description="Penicillin-binding protein PbpB">
    <location>
        <begin position="1"/>
        <end position="648"/>
    </location>
</feature>
<feature type="transmembrane region" description="Helical" evidence="2">
    <location>
        <begin position="52"/>
        <end position="72"/>
    </location>
</feature>
<feature type="region of interest" description="Disordered" evidence="3">
    <location>
        <begin position="1"/>
        <end position="35"/>
    </location>
</feature>
<feature type="active site" description="Acyl-ester intermediate" evidence="1">
    <location>
        <position position="355"/>
    </location>
</feature>
<gene>
    <name type="primary">pbpB</name>
    <name type="synonym">ftsI</name>
    <name type="ordered locus">MSMEG_4233</name>
    <name type="ordered locus">MSMEI_4133</name>
</gene>
<comment type="subunit">
    <text evidence="4">Interacts with Wag31.</text>
</comment>
<comment type="subcellular location">
    <subcellularLocation>
        <location evidence="5">Cell membrane</location>
        <topology evidence="5">Single-pass membrane protein</topology>
    </subcellularLocation>
</comment>
<comment type="similarity">
    <text evidence="5">Belongs to the transpeptidase family.</text>
</comment>
<accession>A0R022</accession>